<keyword id="KW-0050">Antiport</keyword>
<keyword id="KW-0997">Cell inner membrane</keyword>
<keyword id="KW-1003">Cell membrane</keyword>
<keyword id="KW-0406">Ion transport</keyword>
<keyword id="KW-0472">Membrane</keyword>
<keyword id="KW-0614">Plasmid</keyword>
<keyword id="KW-1185">Reference proteome</keyword>
<keyword id="KW-0915">Sodium</keyword>
<keyword id="KW-0739">Sodium transport</keyword>
<keyword id="KW-0812">Transmembrane</keyword>
<keyword id="KW-1133">Transmembrane helix</keyword>
<keyword id="KW-0813">Transport</keyword>
<feature type="chain" id="PRO_0000334215" description="Na(+)/H(+) antiporter NhaA 1">
    <location>
        <begin position="1"/>
        <end position="449"/>
    </location>
</feature>
<feature type="transmembrane region" description="Helical" evidence="1">
    <location>
        <begin position="32"/>
        <end position="52"/>
    </location>
</feature>
<feature type="transmembrane region" description="Helical" evidence="1">
    <location>
        <begin position="87"/>
        <end position="107"/>
    </location>
</feature>
<feature type="transmembrane region" description="Helical" evidence="1">
    <location>
        <begin position="114"/>
        <end position="134"/>
    </location>
</feature>
<feature type="transmembrane region" description="Helical" evidence="1">
    <location>
        <begin position="145"/>
        <end position="165"/>
    </location>
</feature>
<feature type="transmembrane region" description="Helical" evidence="1">
    <location>
        <begin position="174"/>
        <end position="194"/>
    </location>
</feature>
<feature type="transmembrane region" description="Helical" evidence="1">
    <location>
        <begin position="202"/>
        <end position="222"/>
    </location>
</feature>
<feature type="transmembrane region" description="Helical" evidence="1">
    <location>
        <begin position="233"/>
        <end position="253"/>
    </location>
</feature>
<feature type="transmembrane region" description="Helical" evidence="1">
    <location>
        <begin position="318"/>
        <end position="338"/>
    </location>
</feature>
<feature type="transmembrane region" description="Helical" evidence="1">
    <location>
        <begin position="347"/>
        <end position="367"/>
    </location>
</feature>
<feature type="transmembrane region" description="Helical" evidence="1">
    <location>
        <begin position="382"/>
        <end position="402"/>
    </location>
</feature>
<feature type="transmembrane region" description="Helical" evidence="1">
    <location>
        <begin position="417"/>
        <end position="437"/>
    </location>
</feature>
<evidence type="ECO:0000255" key="1">
    <source>
        <dbReference type="HAMAP-Rule" id="MF_01844"/>
    </source>
</evidence>
<accession>A5FT18</accession>
<protein>
    <recommendedName>
        <fullName evidence="1">Na(+)/H(+) antiporter NhaA 1</fullName>
    </recommendedName>
    <alternativeName>
        <fullName evidence="1">Sodium/proton antiporter NhaA 1</fullName>
    </alternativeName>
</protein>
<reference key="1">
    <citation type="submission" date="2007-05" db="EMBL/GenBank/DDBJ databases">
        <title>Complete sequence of plasmid1 pACRY01 of Acidiphilium cryptum JF-5.</title>
        <authorList>
            <consortium name="US DOE Joint Genome Institute"/>
            <person name="Copeland A."/>
            <person name="Lucas S."/>
            <person name="Lapidus A."/>
            <person name="Barry K."/>
            <person name="Detter J.C."/>
            <person name="Glavina del Rio T."/>
            <person name="Hammon N."/>
            <person name="Israni S."/>
            <person name="Dalin E."/>
            <person name="Tice H."/>
            <person name="Pitluck S."/>
            <person name="Sims D."/>
            <person name="Brettin T."/>
            <person name="Bruce D."/>
            <person name="Han C."/>
            <person name="Schmutz J."/>
            <person name="Larimer F."/>
            <person name="Land M."/>
            <person name="Hauser L."/>
            <person name="Kyrpides N."/>
            <person name="Kim E."/>
            <person name="Magnuson T."/>
            <person name="Richardson P."/>
        </authorList>
    </citation>
    <scope>NUCLEOTIDE SEQUENCE [LARGE SCALE GENOMIC DNA]</scope>
    <source>
        <strain>JF-5</strain>
    </source>
</reference>
<geneLocation type="plasmid">
    <name>pACRY01</name>
</geneLocation>
<organism>
    <name type="scientific">Acidiphilium cryptum (strain JF-5)</name>
    <dbReference type="NCBI Taxonomy" id="349163"/>
    <lineage>
        <taxon>Bacteria</taxon>
        <taxon>Pseudomonadati</taxon>
        <taxon>Pseudomonadota</taxon>
        <taxon>Alphaproteobacteria</taxon>
        <taxon>Acetobacterales</taxon>
        <taxon>Acidocellaceae</taxon>
        <taxon>Acidiphilium</taxon>
    </lineage>
</organism>
<gene>
    <name evidence="1" type="primary">nhaA1</name>
    <name type="ordered locus">Acry_3123</name>
</gene>
<dbReference type="EMBL" id="CP000689">
    <property type="protein sequence ID" value="ABQ28750.1"/>
    <property type="molecule type" value="Genomic_DNA"/>
</dbReference>
<dbReference type="RefSeq" id="WP_011930565.1">
    <property type="nucleotide sequence ID" value="NC_009467.1"/>
</dbReference>
<dbReference type="SMR" id="A5FT18"/>
<dbReference type="KEGG" id="acr:Acry_3123"/>
<dbReference type="HOGENOM" id="CLU_015803_1_2_5"/>
<dbReference type="Proteomes" id="UP000000245">
    <property type="component" value="Plasmid pACRY01"/>
</dbReference>
<dbReference type="GO" id="GO:0005886">
    <property type="term" value="C:plasma membrane"/>
    <property type="evidence" value="ECO:0007669"/>
    <property type="project" value="UniProtKB-SubCell"/>
</dbReference>
<dbReference type="GO" id="GO:0015385">
    <property type="term" value="F:sodium:proton antiporter activity"/>
    <property type="evidence" value="ECO:0007669"/>
    <property type="project" value="TreeGrafter"/>
</dbReference>
<dbReference type="GO" id="GO:0006885">
    <property type="term" value="P:regulation of pH"/>
    <property type="evidence" value="ECO:0007669"/>
    <property type="project" value="InterPro"/>
</dbReference>
<dbReference type="Gene3D" id="1.20.1530.10">
    <property type="entry name" value="Na+/H+ antiporter like domain"/>
    <property type="match status" value="1"/>
</dbReference>
<dbReference type="HAMAP" id="MF_01844">
    <property type="entry name" value="NhaA"/>
    <property type="match status" value="1"/>
</dbReference>
<dbReference type="InterPro" id="IPR023171">
    <property type="entry name" value="Na/H_antiporter_dom_sf"/>
</dbReference>
<dbReference type="InterPro" id="IPR004670">
    <property type="entry name" value="NhaA"/>
</dbReference>
<dbReference type="NCBIfam" id="TIGR00773">
    <property type="entry name" value="NhaA"/>
    <property type="match status" value="1"/>
</dbReference>
<dbReference type="PANTHER" id="PTHR30341:SF0">
    <property type="entry name" value="NA(+)_H(+) ANTIPORTER NHAA"/>
    <property type="match status" value="1"/>
</dbReference>
<dbReference type="PANTHER" id="PTHR30341">
    <property type="entry name" value="SODIUM ION/PROTON ANTIPORTER NHAA-RELATED"/>
    <property type="match status" value="1"/>
</dbReference>
<dbReference type="Pfam" id="PF06965">
    <property type="entry name" value="Na_H_antiport_1"/>
    <property type="match status" value="1"/>
</dbReference>
<comment type="function">
    <text evidence="1">Na(+)/H(+) antiporter that extrudes sodium in exchange for external protons.</text>
</comment>
<comment type="catalytic activity">
    <reaction evidence="1">
        <text>Na(+)(in) + 2 H(+)(out) = Na(+)(out) + 2 H(+)(in)</text>
        <dbReference type="Rhea" id="RHEA:29251"/>
        <dbReference type="ChEBI" id="CHEBI:15378"/>
        <dbReference type="ChEBI" id="CHEBI:29101"/>
    </reaction>
    <physiologicalReaction direction="left-to-right" evidence="1">
        <dbReference type="Rhea" id="RHEA:29252"/>
    </physiologicalReaction>
</comment>
<comment type="subcellular location">
    <subcellularLocation>
        <location evidence="1">Cell inner membrane</location>
        <topology evidence="1">Multi-pass membrane protein</topology>
    </subcellularLocation>
</comment>
<comment type="similarity">
    <text evidence="1">Belongs to the NhaA Na(+)/H(+) (TC 2.A.33) antiporter family.</text>
</comment>
<sequence>MITDQNSKPQQGELPTTHIDALTNSFSQFLRIEATSGAVLLLATVVALTLSNSPWSDGFRSLWETPIGIQIGAFQFLRSLRDLINDGLMTLFFFIVALEIKREVVLGELRNPRMVAFSVVAAAGGMLVPMGLYLALQHGQPGQHGWGVVMPTDTAFVIGCLALLGSRVPPGLRVFLLSLAVVDDLAAILVVAVGYSRSIDWTALALGAVGLVIIRGMALLGVRNIRVYFLAGAIIWLAVNASGIHATIVGVILGLMTPTAGWVSDQRLGEILRKVLSYPPGDHWSGDTEDNRALQVAGIAVRETLSPVERLEAMLHPWVAFGVMPLFALANAGVSITIKGLINPVSLAVMAGFVLGKPIGVTAFAWLGVRTGVAIRPAGLTWGGLVGGALLTGIGFTMALFIAGQAFQDATLNAAKLGILAASVVSSVAGLTLLCMFPKRDQTLDADFH</sequence>
<proteinExistence type="inferred from homology"/>
<name>NHAA1_ACICJ</name>